<evidence type="ECO:0000255" key="1">
    <source>
        <dbReference type="HAMAP-Rule" id="MF_00178"/>
    </source>
</evidence>
<feature type="chain" id="PRO_1000040474" description="6,7-dimethyl-8-ribityllumazine synthase">
    <location>
        <begin position="1"/>
        <end position="155"/>
    </location>
</feature>
<feature type="active site" description="Proton donor" evidence="1">
    <location>
        <position position="89"/>
    </location>
</feature>
<feature type="binding site" evidence="1">
    <location>
        <position position="23"/>
    </location>
    <ligand>
        <name>5-amino-6-(D-ribitylamino)uracil</name>
        <dbReference type="ChEBI" id="CHEBI:15934"/>
    </ligand>
</feature>
<feature type="binding site" evidence="1">
    <location>
        <begin position="57"/>
        <end position="59"/>
    </location>
    <ligand>
        <name>5-amino-6-(D-ribitylamino)uracil</name>
        <dbReference type="ChEBI" id="CHEBI:15934"/>
    </ligand>
</feature>
<feature type="binding site" evidence="1">
    <location>
        <begin position="81"/>
        <end position="83"/>
    </location>
    <ligand>
        <name>5-amino-6-(D-ribitylamino)uracil</name>
        <dbReference type="ChEBI" id="CHEBI:15934"/>
    </ligand>
</feature>
<feature type="binding site" evidence="1">
    <location>
        <begin position="86"/>
        <end position="87"/>
    </location>
    <ligand>
        <name>(2S)-2-hydroxy-3-oxobutyl phosphate</name>
        <dbReference type="ChEBI" id="CHEBI:58830"/>
    </ligand>
</feature>
<feature type="binding site" evidence="1">
    <location>
        <position position="114"/>
    </location>
    <ligand>
        <name>5-amino-6-(D-ribitylamino)uracil</name>
        <dbReference type="ChEBI" id="CHEBI:15934"/>
    </ligand>
</feature>
<feature type="binding site" evidence="1">
    <location>
        <position position="128"/>
    </location>
    <ligand>
        <name>(2S)-2-hydroxy-3-oxobutyl phosphate</name>
        <dbReference type="ChEBI" id="CHEBI:58830"/>
    </ligand>
</feature>
<reference key="1">
    <citation type="submission" date="2006-10" db="EMBL/GenBank/DDBJ databases">
        <title>Complete sequence of chromosome of Pelobacter propionicus DSM 2379.</title>
        <authorList>
            <consortium name="US DOE Joint Genome Institute"/>
            <person name="Copeland A."/>
            <person name="Lucas S."/>
            <person name="Lapidus A."/>
            <person name="Barry K."/>
            <person name="Detter J.C."/>
            <person name="Glavina del Rio T."/>
            <person name="Hammon N."/>
            <person name="Israni S."/>
            <person name="Dalin E."/>
            <person name="Tice H."/>
            <person name="Pitluck S."/>
            <person name="Saunders E."/>
            <person name="Brettin T."/>
            <person name="Bruce D."/>
            <person name="Han C."/>
            <person name="Tapia R."/>
            <person name="Schmutz J."/>
            <person name="Larimer F."/>
            <person name="Land M."/>
            <person name="Hauser L."/>
            <person name="Kyrpides N."/>
            <person name="Kim E."/>
            <person name="Lovley D."/>
            <person name="Richardson P."/>
        </authorList>
    </citation>
    <scope>NUCLEOTIDE SEQUENCE [LARGE SCALE GENOMIC DNA]</scope>
    <source>
        <strain>DSM 2379 / NBRC 103807 / OttBd1</strain>
    </source>
</reference>
<comment type="function">
    <text evidence="1">Catalyzes the formation of 6,7-dimethyl-8-ribityllumazine by condensation of 5-amino-6-(D-ribitylamino)uracil with 3,4-dihydroxy-2-butanone 4-phosphate. This is the penultimate step in the biosynthesis of riboflavin.</text>
</comment>
<comment type="catalytic activity">
    <reaction evidence="1">
        <text>(2S)-2-hydroxy-3-oxobutyl phosphate + 5-amino-6-(D-ribitylamino)uracil = 6,7-dimethyl-8-(1-D-ribityl)lumazine + phosphate + 2 H2O + H(+)</text>
        <dbReference type="Rhea" id="RHEA:26152"/>
        <dbReference type="ChEBI" id="CHEBI:15377"/>
        <dbReference type="ChEBI" id="CHEBI:15378"/>
        <dbReference type="ChEBI" id="CHEBI:15934"/>
        <dbReference type="ChEBI" id="CHEBI:43474"/>
        <dbReference type="ChEBI" id="CHEBI:58201"/>
        <dbReference type="ChEBI" id="CHEBI:58830"/>
        <dbReference type="EC" id="2.5.1.78"/>
    </reaction>
</comment>
<comment type="pathway">
    <text evidence="1">Cofactor biosynthesis; riboflavin biosynthesis; riboflavin from 2-hydroxy-3-oxobutyl phosphate and 5-amino-6-(D-ribitylamino)uracil: step 1/2.</text>
</comment>
<comment type="similarity">
    <text evidence="1">Belongs to the DMRL synthase family.</text>
</comment>
<name>RISB_PELPD</name>
<proteinExistence type="inferred from homology"/>
<gene>
    <name evidence="1" type="primary">ribH</name>
    <name type="ordered locus">Ppro_1296</name>
</gene>
<protein>
    <recommendedName>
        <fullName evidence="1">6,7-dimethyl-8-ribityllumazine synthase</fullName>
        <shortName evidence="1">DMRL synthase</shortName>
        <shortName evidence="1">LS</shortName>
        <shortName evidence="1">Lumazine synthase</shortName>
        <ecNumber evidence="1">2.5.1.78</ecNumber>
    </recommendedName>
</protein>
<sequence>MPRYFEGKLDAKGQKIGIVVSRFNSFITERLLEGAVDALVRHGADEQEIHIARVPGAFEIPLAAKKMAASGAYDAIIALGAVIRGSTPHFDYVSSEVTKGVAAVSLESGVPISFGVLTTDSIEQAVERAGTKAGNKGFEAAVTVIETVNLLRSIN</sequence>
<organism>
    <name type="scientific">Pelobacter propionicus (strain DSM 2379 / NBRC 103807 / OttBd1)</name>
    <dbReference type="NCBI Taxonomy" id="338966"/>
    <lineage>
        <taxon>Bacteria</taxon>
        <taxon>Pseudomonadati</taxon>
        <taxon>Thermodesulfobacteriota</taxon>
        <taxon>Desulfuromonadia</taxon>
        <taxon>Desulfuromonadales</taxon>
        <taxon>Desulfuromonadaceae</taxon>
        <taxon>Pelobacter</taxon>
    </lineage>
</organism>
<keyword id="KW-1185">Reference proteome</keyword>
<keyword id="KW-0686">Riboflavin biosynthesis</keyword>
<keyword id="KW-0808">Transferase</keyword>
<accession>A1ANJ6</accession>
<dbReference type="EC" id="2.5.1.78" evidence="1"/>
<dbReference type="EMBL" id="CP000482">
    <property type="protein sequence ID" value="ABK98916.1"/>
    <property type="molecule type" value="Genomic_DNA"/>
</dbReference>
<dbReference type="RefSeq" id="WP_011735218.1">
    <property type="nucleotide sequence ID" value="NC_008609.1"/>
</dbReference>
<dbReference type="SMR" id="A1ANJ6"/>
<dbReference type="STRING" id="338966.Ppro_1296"/>
<dbReference type="KEGG" id="ppd:Ppro_1296"/>
<dbReference type="eggNOG" id="COG0054">
    <property type="taxonomic scope" value="Bacteria"/>
</dbReference>
<dbReference type="HOGENOM" id="CLU_089358_1_1_7"/>
<dbReference type="OrthoDB" id="9809709at2"/>
<dbReference type="UniPathway" id="UPA00275">
    <property type="reaction ID" value="UER00404"/>
</dbReference>
<dbReference type="Proteomes" id="UP000006732">
    <property type="component" value="Chromosome"/>
</dbReference>
<dbReference type="GO" id="GO:0005829">
    <property type="term" value="C:cytosol"/>
    <property type="evidence" value="ECO:0007669"/>
    <property type="project" value="TreeGrafter"/>
</dbReference>
<dbReference type="GO" id="GO:0009349">
    <property type="term" value="C:riboflavin synthase complex"/>
    <property type="evidence" value="ECO:0007669"/>
    <property type="project" value="InterPro"/>
</dbReference>
<dbReference type="GO" id="GO:0000906">
    <property type="term" value="F:6,7-dimethyl-8-ribityllumazine synthase activity"/>
    <property type="evidence" value="ECO:0007669"/>
    <property type="project" value="UniProtKB-UniRule"/>
</dbReference>
<dbReference type="GO" id="GO:0009231">
    <property type="term" value="P:riboflavin biosynthetic process"/>
    <property type="evidence" value="ECO:0007669"/>
    <property type="project" value="UniProtKB-UniRule"/>
</dbReference>
<dbReference type="CDD" id="cd09209">
    <property type="entry name" value="Lumazine_synthase-I"/>
    <property type="match status" value="1"/>
</dbReference>
<dbReference type="FunFam" id="3.40.50.960:FF:000001">
    <property type="entry name" value="6,7-dimethyl-8-ribityllumazine synthase"/>
    <property type="match status" value="1"/>
</dbReference>
<dbReference type="Gene3D" id="3.40.50.960">
    <property type="entry name" value="Lumazine/riboflavin synthase"/>
    <property type="match status" value="1"/>
</dbReference>
<dbReference type="HAMAP" id="MF_00178">
    <property type="entry name" value="Lumazine_synth"/>
    <property type="match status" value="1"/>
</dbReference>
<dbReference type="InterPro" id="IPR034964">
    <property type="entry name" value="LS"/>
</dbReference>
<dbReference type="InterPro" id="IPR002180">
    <property type="entry name" value="LS/RS"/>
</dbReference>
<dbReference type="InterPro" id="IPR036467">
    <property type="entry name" value="LS/RS_sf"/>
</dbReference>
<dbReference type="NCBIfam" id="TIGR00114">
    <property type="entry name" value="lumazine-synth"/>
    <property type="match status" value="1"/>
</dbReference>
<dbReference type="NCBIfam" id="NF000812">
    <property type="entry name" value="PRK00061.1-4"/>
    <property type="match status" value="1"/>
</dbReference>
<dbReference type="PANTHER" id="PTHR21058:SF0">
    <property type="entry name" value="6,7-DIMETHYL-8-RIBITYLLUMAZINE SYNTHASE"/>
    <property type="match status" value="1"/>
</dbReference>
<dbReference type="PANTHER" id="PTHR21058">
    <property type="entry name" value="6,7-DIMETHYL-8-RIBITYLLUMAZINE SYNTHASE DMRL SYNTHASE LUMAZINE SYNTHASE"/>
    <property type="match status" value="1"/>
</dbReference>
<dbReference type="Pfam" id="PF00885">
    <property type="entry name" value="DMRL_synthase"/>
    <property type="match status" value="1"/>
</dbReference>
<dbReference type="SUPFAM" id="SSF52121">
    <property type="entry name" value="Lumazine synthase"/>
    <property type="match status" value="1"/>
</dbReference>